<name>PAU20_YEAST</name>
<protein>
    <recommendedName>
        <fullName>Seripauperin-20</fullName>
    </recommendedName>
</protein>
<sequence>MVKLTSIAAGVAAIAAGASATTTLAQSDERVNLVELGVYVSDIRAHLAQYYMFQAAHPTETYPVEVAEAVFNYGDFTTMLTGISPDQVTRMITGVPWYSTRLKPAISKALSKDGIYTIAN</sequence>
<dbReference type="EMBL" id="Z74903">
    <property type="protein sequence ID" value="CAA99183.1"/>
    <property type="molecule type" value="Genomic_DNA"/>
</dbReference>
<dbReference type="EMBL" id="AY692641">
    <property type="protein sequence ID" value="AAT92660.1"/>
    <property type="molecule type" value="Genomic_DNA"/>
</dbReference>
<dbReference type="EMBL" id="BK006948">
    <property type="protein sequence ID" value="DAA10625.1"/>
    <property type="molecule type" value="Genomic_DNA"/>
</dbReference>
<dbReference type="PIR" id="S66860">
    <property type="entry name" value="S66860"/>
</dbReference>
<dbReference type="RefSeq" id="NP_014481.1">
    <property type="nucleotide sequence ID" value="NM_001183414.1"/>
</dbReference>
<dbReference type="BioGRID" id="34257">
    <property type="interactions" value="26"/>
</dbReference>
<dbReference type="FunCoup" id="Q08322">
    <property type="interactions" value="52"/>
</dbReference>
<dbReference type="IntAct" id="Q08322">
    <property type="interactions" value="1"/>
</dbReference>
<dbReference type="STRING" id="4932.YOL161C"/>
<dbReference type="PaxDb" id="4932-YOL161C"/>
<dbReference type="EnsemblFungi" id="YOL161C_mRNA">
    <property type="protein sequence ID" value="YOL161C"/>
    <property type="gene ID" value="YOL161C"/>
</dbReference>
<dbReference type="GeneID" id="854003"/>
<dbReference type="KEGG" id="sce:YOL161C"/>
<dbReference type="AGR" id="SGD:S000005521"/>
<dbReference type="SGD" id="S000005521">
    <property type="gene designation" value="PAU20"/>
</dbReference>
<dbReference type="VEuPathDB" id="FungiDB:YOL161C"/>
<dbReference type="eggNOG" id="ENOG502SR1B">
    <property type="taxonomic scope" value="Eukaryota"/>
</dbReference>
<dbReference type="GeneTree" id="ENSGT00940000176276"/>
<dbReference type="HOGENOM" id="CLU_136376_0_0_1"/>
<dbReference type="InParanoid" id="Q08322"/>
<dbReference type="OrthoDB" id="4059055at2759"/>
<dbReference type="BioCyc" id="YEAST:G3O-33548-MONOMER"/>
<dbReference type="BioGRID-ORCS" id="854003">
    <property type="hits" value="0 hits in 10 CRISPR screens"/>
</dbReference>
<dbReference type="PRO" id="PR:Q08322"/>
<dbReference type="Proteomes" id="UP000002311">
    <property type="component" value="Chromosome XV"/>
</dbReference>
<dbReference type="RNAct" id="Q08322">
    <property type="molecule type" value="protein"/>
</dbReference>
<dbReference type="GO" id="GO:0009277">
    <property type="term" value="C:fungal-type cell wall"/>
    <property type="evidence" value="ECO:0000318"/>
    <property type="project" value="GO_Central"/>
</dbReference>
<dbReference type="GO" id="GO:0000324">
    <property type="term" value="C:fungal-type vacuole"/>
    <property type="evidence" value="ECO:0007005"/>
    <property type="project" value="SGD"/>
</dbReference>
<dbReference type="GO" id="GO:0016020">
    <property type="term" value="C:membrane"/>
    <property type="evidence" value="ECO:0007669"/>
    <property type="project" value="UniProtKB-SubCell"/>
</dbReference>
<dbReference type="GO" id="GO:0005199">
    <property type="term" value="F:structural constituent of cell wall"/>
    <property type="evidence" value="ECO:0000318"/>
    <property type="project" value="GO_Central"/>
</dbReference>
<dbReference type="GO" id="GO:0031505">
    <property type="term" value="P:fungal-type cell wall organization"/>
    <property type="evidence" value="ECO:0000318"/>
    <property type="project" value="GO_Central"/>
</dbReference>
<dbReference type="InterPro" id="IPR000992">
    <property type="entry name" value="SRP1_TIP1"/>
</dbReference>
<dbReference type="InterPro" id="IPR050788">
    <property type="entry name" value="Yeast_SRP1/TIP1_CWP"/>
</dbReference>
<dbReference type="PANTHER" id="PTHR31002:SF34">
    <property type="entry name" value="CELL WALL PROTEIN CWP1-RELATED"/>
    <property type="match status" value="1"/>
</dbReference>
<dbReference type="PANTHER" id="PTHR31002">
    <property type="entry name" value="SERIPAUPERIN"/>
    <property type="match status" value="1"/>
</dbReference>
<dbReference type="Pfam" id="PF00660">
    <property type="entry name" value="SRP1_TIP1"/>
    <property type="match status" value="1"/>
</dbReference>
<dbReference type="PROSITE" id="PS00724">
    <property type="entry name" value="SRP1_TIP1"/>
    <property type="match status" value="1"/>
</dbReference>
<gene>
    <name type="primary">PAU20</name>
    <name type="ordered locus">YOL161C</name>
</gene>
<comment type="subcellular location">
    <subcellularLocation>
        <location evidence="2">Membrane</location>
        <topology evidence="2">Single-pass membrane protein</topology>
    </subcellularLocation>
</comment>
<comment type="similarity">
    <text evidence="2">Belongs to the SRP1/TIP1 family. Seripauperin subfamily.</text>
</comment>
<feature type="chain" id="PRO_0000245258" description="Seripauperin-20">
    <location>
        <begin position="1"/>
        <end position="120"/>
    </location>
</feature>
<feature type="transmembrane region" description="Helical" evidence="1">
    <location>
        <begin position="7"/>
        <end position="25"/>
    </location>
</feature>
<organism>
    <name type="scientific">Saccharomyces cerevisiae (strain ATCC 204508 / S288c)</name>
    <name type="common">Baker's yeast</name>
    <dbReference type="NCBI Taxonomy" id="559292"/>
    <lineage>
        <taxon>Eukaryota</taxon>
        <taxon>Fungi</taxon>
        <taxon>Dikarya</taxon>
        <taxon>Ascomycota</taxon>
        <taxon>Saccharomycotina</taxon>
        <taxon>Saccharomycetes</taxon>
        <taxon>Saccharomycetales</taxon>
        <taxon>Saccharomycetaceae</taxon>
        <taxon>Saccharomyces</taxon>
    </lineage>
</organism>
<proteinExistence type="inferred from homology"/>
<accession>Q08322</accession>
<accession>D6W1Q9</accession>
<keyword id="KW-0472">Membrane</keyword>
<keyword id="KW-1185">Reference proteome</keyword>
<keyword id="KW-0812">Transmembrane</keyword>
<keyword id="KW-1133">Transmembrane helix</keyword>
<evidence type="ECO:0000255" key="1"/>
<evidence type="ECO:0000305" key="2"/>
<reference key="1">
    <citation type="journal article" date="1997" name="Nature">
        <title>The nucleotide sequence of Saccharomyces cerevisiae chromosome XV.</title>
        <authorList>
            <person name="Dujon B."/>
            <person name="Albermann K."/>
            <person name="Aldea M."/>
            <person name="Alexandraki D."/>
            <person name="Ansorge W."/>
            <person name="Arino J."/>
            <person name="Benes V."/>
            <person name="Bohn C."/>
            <person name="Bolotin-Fukuhara M."/>
            <person name="Bordonne R."/>
            <person name="Boyer J."/>
            <person name="Camasses A."/>
            <person name="Casamayor A."/>
            <person name="Casas C."/>
            <person name="Cheret G."/>
            <person name="Cziepluch C."/>
            <person name="Daignan-Fornier B."/>
            <person name="Dang V.-D."/>
            <person name="de Haan M."/>
            <person name="Delius H."/>
            <person name="Durand P."/>
            <person name="Fairhead C."/>
            <person name="Feldmann H."/>
            <person name="Gaillon L."/>
            <person name="Galisson F."/>
            <person name="Gamo F.-J."/>
            <person name="Gancedo C."/>
            <person name="Goffeau A."/>
            <person name="Goulding S.E."/>
            <person name="Grivell L.A."/>
            <person name="Habbig B."/>
            <person name="Hand N.J."/>
            <person name="Hani J."/>
            <person name="Hattenhorst U."/>
            <person name="Hebling U."/>
            <person name="Hernando Y."/>
            <person name="Herrero E."/>
            <person name="Heumann K."/>
            <person name="Hiesel R."/>
            <person name="Hilger F."/>
            <person name="Hofmann B."/>
            <person name="Hollenberg C.P."/>
            <person name="Hughes B."/>
            <person name="Jauniaux J.-C."/>
            <person name="Kalogeropoulos A."/>
            <person name="Katsoulou C."/>
            <person name="Kordes E."/>
            <person name="Lafuente M.J."/>
            <person name="Landt O."/>
            <person name="Louis E.J."/>
            <person name="Maarse A.C."/>
            <person name="Madania A."/>
            <person name="Mannhaupt G."/>
            <person name="Marck C."/>
            <person name="Martin R.P."/>
            <person name="Mewes H.-W."/>
            <person name="Michaux G."/>
            <person name="Paces V."/>
            <person name="Parle-McDermott A.G."/>
            <person name="Pearson B.M."/>
            <person name="Perrin A."/>
            <person name="Pettersson B."/>
            <person name="Poch O."/>
            <person name="Pohl T.M."/>
            <person name="Poirey R."/>
            <person name="Portetelle D."/>
            <person name="Pujol A."/>
            <person name="Purnelle B."/>
            <person name="Ramezani Rad M."/>
            <person name="Rechmann S."/>
            <person name="Schwager C."/>
            <person name="Schweizer M."/>
            <person name="Sor F."/>
            <person name="Sterky F."/>
            <person name="Tarassov I.A."/>
            <person name="Teodoru C."/>
            <person name="Tettelin H."/>
            <person name="Thierry A."/>
            <person name="Tobiasch E."/>
            <person name="Tzermia M."/>
            <person name="Uhlen M."/>
            <person name="Unseld M."/>
            <person name="Valens M."/>
            <person name="Vandenbol M."/>
            <person name="Vetter I."/>
            <person name="Vlcek C."/>
            <person name="Voet M."/>
            <person name="Volckaert G."/>
            <person name="Voss H."/>
            <person name="Wambutt R."/>
            <person name="Wedler H."/>
            <person name="Wiemann S."/>
            <person name="Winsor B."/>
            <person name="Wolfe K.H."/>
            <person name="Zollner A."/>
            <person name="Zumstein E."/>
            <person name="Kleine K."/>
        </authorList>
    </citation>
    <scope>NUCLEOTIDE SEQUENCE [LARGE SCALE GENOMIC DNA]</scope>
    <source>
        <strain>ATCC 204508 / S288c</strain>
    </source>
</reference>
<reference key="2">
    <citation type="journal article" date="2014" name="G3 (Bethesda)">
        <title>The reference genome sequence of Saccharomyces cerevisiae: Then and now.</title>
        <authorList>
            <person name="Engel S.R."/>
            <person name="Dietrich F.S."/>
            <person name="Fisk D.G."/>
            <person name="Binkley G."/>
            <person name="Balakrishnan R."/>
            <person name="Costanzo M.C."/>
            <person name="Dwight S.S."/>
            <person name="Hitz B.C."/>
            <person name="Karra K."/>
            <person name="Nash R.S."/>
            <person name="Weng S."/>
            <person name="Wong E.D."/>
            <person name="Lloyd P."/>
            <person name="Skrzypek M.S."/>
            <person name="Miyasato S.R."/>
            <person name="Simison M."/>
            <person name="Cherry J.M."/>
        </authorList>
    </citation>
    <scope>GENOME REANNOTATION</scope>
    <source>
        <strain>ATCC 204508 / S288c</strain>
    </source>
</reference>
<reference key="3">
    <citation type="journal article" date="2007" name="Genome Res.">
        <title>Approaching a complete repository of sequence-verified protein-encoding clones for Saccharomyces cerevisiae.</title>
        <authorList>
            <person name="Hu Y."/>
            <person name="Rolfs A."/>
            <person name="Bhullar B."/>
            <person name="Murthy T.V.S."/>
            <person name="Zhu C."/>
            <person name="Berger M.F."/>
            <person name="Camargo A.A."/>
            <person name="Kelley F."/>
            <person name="McCarron S."/>
            <person name="Jepson D."/>
            <person name="Richardson A."/>
            <person name="Raphael J."/>
            <person name="Moreira D."/>
            <person name="Taycher E."/>
            <person name="Zuo D."/>
            <person name="Mohr S."/>
            <person name="Kane M.F."/>
            <person name="Williamson J."/>
            <person name="Simpson A.J.G."/>
            <person name="Bulyk M.L."/>
            <person name="Harlow E."/>
            <person name="Marsischky G."/>
            <person name="Kolodner R.D."/>
            <person name="LaBaer J."/>
        </authorList>
    </citation>
    <scope>NUCLEOTIDE SEQUENCE [GENOMIC DNA]</scope>
    <source>
        <strain>ATCC 204508 / S288c</strain>
    </source>
</reference>